<proteinExistence type="evidence at protein level"/>
<reference key="1">
    <citation type="journal article" date="2005" name="Science">
        <title>The transcriptional landscape of the mammalian genome.</title>
        <authorList>
            <person name="Carninci P."/>
            <person name="Kasukawa T."/>
            <person name="Katayama S."/>
            <person name="Gough J."/>
            <person name="Frith M.C."/>
            <person name="Maeda N."/>
            <person name="Oyama R."/>
            <person name="Ravasi T."/>
            <person name="Lenhard B."/>
            <person name="Wells C."/>
            <person name="Kodzius R."/>
            <person name="Shimokawa K."/>
            <person name="Bajic V.B."/>
            <person name="Brenner S.E."/>
            <person name="Batalov S."/>
            <person name="Forrest A.R."/>
            <person name="Zavolan M."/>
            <person name="Davis M.J."/>
            <person name="Wilming L.G."/>
            <person name="Aidinis V."/>
            <person name="Allen J.E."/>
            <person name="Ambesi-Impiombato A."/>
            <person name="Apweiler R."/>
            <person name="Aturaliya R.N."/>
            <person name="Bailey T.L."/>
            <person name="Bansal M."/>
            <person name="Baxter L."/>
            <person name="Beisel K.W."/>
            <person name="Bersano T."/>
            <person name="Bono H."/>
            <person name="Chalk A.M."/>
            <person name="Chiu K.P."/>
            <person name="Choudhary V."/>
            <person name="Christoffels A."/>
            <person name="Clutterbuck D.R."/>
            <person name="Crowe M.L."/>
            <person name="Dalla E."/>
            <person name="Dalrymple B.P."/>
            <person name="de Bono B."/>
            <person name="Della Gatta G."/>
            <person name="di Bernardo D."/>
            <person name="Down T."/>
            <person name="Engstrom P."/>
            <person name="Fagiolini M."/>
            <person name="Faulkner G."/>
            <person name="Fletcher C.F."/>
            <person name="Fukushima T."/>
            <person name="Furuno M."/>
            <person name="Futaki S."/>
            <person name="Gariboldi M."/>
            <person name="Georgii-Hemming P."/>
            <person name="Gingeras T.R."/>
            <person name="Gojobori T."/>
            <person name="Green R.E."/>
            <person name="Gustincich S."/>
            <person name="Harbers M."/>
            <person name="Hayashi Y."/>
            <person name="Hensch T.K."/>
            <person name="Hirokawa N."/>
            <person name="Hill D."/>
            <person name="Huminiecki L."/>
            <person name="Iacono M."/>
            <person name="Ikeo K."/>
            <person name="Iwama A."/>
            <person name="Ishikawa T."/>
            <person name="Jakt M."/>
            <person name="Kanapin A."/>
            <person name="Katoh M."/>
            <person name="Kawasawa Y."/>
            <person name="Kelso J."/>
            <person name="Kitamura H."/>
            <person name="Kitano H."/>
            <person name="Kollias G."/>
            <person name="Krishnan S.P."/>
            <person name="Kruger A."/>
            <person name="Kummerfeld S.K."/>
            <person name="Kurochkin I.V."/>
            <person name="Lareau L.F."/>
            <person name="Lazarevic D."/>
            <person name="Lipovich L."/>
            <person name="Liu J."/>
            <person name="Liuni S."/>
            <person name="McWilliam S."/>
            <person name="Madan Babu M."/>
            <person name="Madera M."/>
            <person name="Marchionni L."/>
            <person name="Matsuda H."/>
            <person name="Matsuzawa S."/>
            <person name="Miki H."/>
            <person name="Mignone F."/>
            <person name="Miyake S."/>
            <person name="Morris K."/>
            <person name="Mottagui-Tabar S."/>
            <person name="Mulder N."/>
            <person name="Nakano N."/>
            <person name="Nakauchi H."/>
            <person name="Ng P."/>
            <person name="Nilsson R."/>
            <person name="Nishiguchi S."/>
            <person name="Nishikawa S."/>
            <person name="Nori F."/>
            <person name="Ohara O."/>
            <person name="Okazaki Y."/>
            <person name="Orlando V."/>
            <person name="Pang K.C."/>
            <person name="Pavan W.J."/>
            <person name="Pavesi G."/>
            <person name="Pesole G."/>
            <person name="Petrovsky N."/>
            <person name="Piazza S."/>
            <person name="Reed J."/>
            <person name="Reid J.F."/>
            <person name="Ring B.Z."/>
            <person name="Ringwald M."/>
            <person name="Rost B."/>
            <person name="Ruan Y."/>
            <person name="Salzberg S.L."/>
            <person name="Sandelin A."/>
            <person name="Schneider C."/>
            <person name="Schoenbach C."/>
            <person name="Sekiguchi K."/>
            <person name="Semple C.A."/>
            <person name="Seno S."/>
            <person name="Sessa L."/>
            <person name="Sheng Y."/>
            <person name="Shibata Y."/>
            <person name="Shimada H."/>
            <person name="Shimada K."/>
            <person name="Silva D."/>
            <person name="Sinclair B."/>
            <person name="Sperling S."/>
            <person name="Stupka E."/>
            <person name="Sugiura K."/>
            <person name="Sultana R."/>
            <person name="Takenaka Y."/>
            <person name="Taki K."/>
            <person name="Tammoja K."/>
            <person name="Tan S.L."/>
            <person name="Tang S."/>
            <person name="Taylor M.S."/>
            <person name="Tegner J."/>
            <person name="Teichmann S.A."/>
            <person name="Ueda H.R."/>
            <person name="van Nimwegen E."/>
            <person name="Verardo R."/>
            <person name="Wei C.L."/>
            <person name="Yagi K."/>
            <person name="Yamanishi H."/>
            <person name="Zabarovsky E."/>
            <person name="Zhu S."/>
            <person name="Zimmer A."/>
            <person name="Hide W."/>
            <person name="Bult C."/>
            <person name="Grimmond S.M."/>
            <person name="Teasdale R.D."/>
            <person name="Liu E.T."/>
            <person name="Brusic V."/>
            <person name="Quackenbush J."/>
            <person name="Wahlestedt C."/>
            <person name="Mattick J.S."/>
            <person name="Hume D.A."/>
            <person name="Kai C."/>
            <person name="Sasaki D."/>
            <person name="Tomaru Y."/>
            <person name="Fukuda S."/>
            <person name="Kanamori-Katayama M."/>
            <person name="Suzuki M."/>
            <person name="Aoki J."/>
            <person name="Arakawa T."/>
            <person name="Iida J."/>
            <person name="Imamura K."/>
            <person name="Itoh M."/>
            <person name="Kato T."/>
            <person name="Kawaji H."/>
            <person name="Kawagashira N."/>
            <person name="Kawashima T."/>
            <person name="Kojima M."/>
            <person name="Kondo S."/>
            <person name="Konno H."/>
            <person name="Nakano K."/>
            <person name="Ninomiya N."/>
            <person name="Nishio T."/>
            <person name="Okada M."/>
            <person name="Plessy C."/>
            <person name="Shibata K."/>
            <person name="Shiraki T."/>
            <person name="Suzuki S."/>
            <person name="Tagami M."/>
            <person name="Waki K."/>
            <person name="Watahiki A."/>
            <person name="Okamura-Oho Y."/>
            <person name="Suzuki H."/>
            <person name="Kawai J."/>
            <person name="Hayashizaki Y."/>
        </authorList>
    </citation>
    <scope>NUCLEOTIDE SEQUENCE [LARGE SCALE MRNA] (ISOFORM 2)</scope>
    <scope>NUCLEOTIDE SEQUENCE [LARGE SCALE MRNA] OF 1-624 (ISOFORM 1)</scope>
    <source>
        <strain>C57BL/6J</strain>
        <strain>NOD</strain>
        <tissue>Inner ear</tissue>
        <tissue>Spleen</tissue>
    </source>
</reference>
<reference key="2">
    <citation type="journal article" date="2009" name="PLoS Biol.">
        <title>Lineage-specific biology revealed by a finished genome assembly of the mouse.</title>
        <authorList>
            <person name="Church D.M."/>
            <person name="Goodstadt L."/>
            <person name="Hillier L.W."/>
            <person name="Zody M.C."/>
            <person name="Goldstein S."/>
            <person name="She X."/>
            <person name="Bult C.J."/>
            <person name="Agarwala R."/>
            <person name="Cherry J.L."/>
            <person name="DiCuccio M."/>
            <person name="Hlavina W."/>
            <person name="Kapustin Y."/>
            <person name="Meric P."/>
            <person name="Maglott D."/>
            <person name="Birtle Z."/>
            <person name="Marques A.C."/>
            <person name="Graves T."/>
            <person name="Zhou S."/>
            <person name="Teague B."/>
            <person name="Potamousis K."/>
            <person name="Churas C."/>
            <person name="Place M."/>
            <person name="Herschleb J."/>
            <person name="Runnheim R."/>
            <person name="Forrest D."/>
            <person name="Amos-Landgraf J."/>
            <person name="Schwartz D.C."/>
            <person name="Cheng Z."/>
            <person name="Lindblad-Toh K."/>
            <person name="Eichler E.E."/>
            <person name="Ponting C.P."/>
        </authorList>
    </citation>
    <scope>NUCLEOTIDE SEQUENCE [LARGE SCALE GENOMIC DNA]</scope>
    <source>
        <strain>C57BL/6J</strain>
    </source>
</reference>
<reference key="3">
    <citation type="journal article" date="2005" name="Dev. Biol.">
        <title>Inactivation of tensin3 in mice results in growth retardation and postnatal lethality.</title>
        <authorList>
            <person name="Chiang M.-K."/>
            <person name="Liao Y.-C."/>
            <person name="Kuwabara Y."/>
            <person name="Lo S.H."/>
        </authorList>
    </citation>
    <scope>TISSUE SPECIFICITY</scope>
    <scope>DEVELOPMENTAL STAGE</scope>
    <scope>DISRUPTION PHENOTYPE</scope>
</reference>
<reference key="4">
    <citation type="journal article" date="2007" name="Proc. Natl. Acad. Sci. U.S.A.">
        <title>Large-scale phosphorylation analysis of mouse liver.</title>
        <authorList>
            <person name="Villen J."/>
            <person name="Beausoleil S.A."/>
            <person name="Gerber S.A."/>
            <person name="Gygi S.P."/>
        </authorList>
    </citation>
    <scope>PHOSPHORYLATION [LARGE SCALE ANALYSIS] AT SER-769</scope>
    <scope>IDENTIFICATION BY MASS SPECTROMETRY [LARGE SCALE ANALYSIS]</scope>
    <source>
        <tissue>Liver</tissue>
    </source>
</reference>
<reference key="5">
    <citation type="journal article" date="2009" name="Immunity">
        <title>The phagosomal proteome in interferon-gamma-activated macrophages.</title>
        <authorList>
            <person name="Trost M."/>
            <person name="English L."/>
            <person name="Lemieux S."/>
            <person name="Courcelles M."/>
            <person name="Desjardins M."/>
            <person name="Thibault P."/>
        </authorList>
    </citation>
    <scope>PHOSPHORYLATION [LARGE SCALE ANALYSIS] AT SER-687; SER-690 AND SER-769</scope>
    <scope>IDENTIFICATION BY MASS SPECTROMETRY [LARGE SCALE ANALYSIS]</scope>
</reference>
<reference key="6">
    <citation type="journal article" date="2009" name="Mol. Cell. Proteomics">
        <title>Large scale localization of protein phosphorylation by use of electron capture dissociation mass spectrometry.</title>
        <authorList>
            <person name="Sweet S.M."/>
            <person name="Bailey C.M."/>
            <person name="Cunningham D.L."/>
            <person name="Heath J.K."/>
            <person name="Cooper H.J."/>
        </authorList>
    </citation>
    <scope>IDENTIFICATION BY MASS SPECTROMETRY [LARGE SCALE ANALYSIS]</scope>
    <source>
        <tissue>Embryonic fibroblast</tissue>
    </source>
</reference>
<reference key="7">
    <citation type="journal article" date="2010" name="Cell">
        <title>A tissue-specific atlas of mouse protein phosphorylation and expression.</title>
        <authorList>
            <person name="Huttlin E.L."/>
            <person name="Jedrychowski M.P."/>
            <person name="Elias J.E."/>
            <person name="Goswami T."/>
            <person name="Rad R."/>
            <person name="Beausoleil S.A."/>
            <person name="Villen J."/>
            <person name="Haas W."/>
            <person name="Sowa M.E."/>
            <person name="Gygi S.P."/>
        </authorList>
    </citation>
    <scope>PHOSPHORYLATION [LARGE SCALE ANALYSIS] AT SER-332; SER-361; SER-370; SER-571; SER-648; SER-690; SER-769; SER-894 AND SER-960</scope>
    <scope>IDENTIFICATION BY MASS SPECTROMETRY [LARGE SCALE ANALYSIS]</scope>
    <source>
        <tissue>Brain</tissue>
        <tissue>Brown adipose tissue</tissue>
        <tissue>Heart</tissue>
        <tissue>Kidney</tissue>
        <tissue>Liver</tissue>
        <tissue>Lung</tissue>
        <tissue>Pancreas</tissue>
        <tissue>Spleen</tissue>
        <tissue>Testis</tissue>
    </source>
</reference>
<reference key="8">
    <citation type="journal article" date="2016" name="J. Cell Sci.">
        <title>Tensin 3 is a new partner of Dock5 that controls osteoclast podosome organization and activity.</title>
        <authorList>
            <person name="Touaitahuata H."/>
            <person name="Morel A."/>
            <person name="Urbach S."/>
            <person name="Mateos-Langerak J."/>
            <person name="de Rossi S."/>
            <person name="Blangy A."/>
        </authorList>
    </citation>
    <scope>FUNCTION</scope>
    <scope>INTERACTION WITH DOCK5</scope>
    <scope>SUBCELLULAR LOCATION</scope>
    <scope>DEVELOPMENTAL STAGE</scope>
    <scope>IDENTIFICATION BY MASS SPECTROMETRY</scope>
</reference>
<reference key="9">
    <citation type="journal article" date="2022" name="J. Cell Biol.">
        <title>PEAK1 Y635 phosphorylation regulates cell migration through association with Tensin3 and integrins.</title>
        <authorList>
            <person name="Zuidema A."/>
            <person name="Atherton P."/>
            <person name="Kreft M."/>
            <person name="Hoekman L."/>
            <person name="Bleijerveld O.B."/>
            <person name="Nagaraj N."/>
            <person name="Chen N."/>
            <person name="Faessler R."/>
            <person name="Sonnenberg A."/>
        </authorList>
    </citation>
    <scope>FUNCTION</scope>
    <scope>INTERACTION WITH ITGB1; ITGB3; ITGB5 AND PEAK1</scope>
    <scope>IDENTIFICATION BY MASS SPECTROMETRY</scope>
</reference>
<sequence length="1440" mass="155589">MEDSHELDLTYVTERIIAVSFPASCSEESYLHSLQEVTRMLKCKHGDNYLVLNLSEKRYDLTKLNPKIMDVGWPELHAPPLDKMCTICKAQESWLNNDPQHVVVIHCRGGKGRIGVVISSYMHFTNVSASADQALDRFAMKKFYDDKISALMEPSQKRYVQFLSGLLSGAMKMNTSPLFLHFVIMHGVPSFDTGGACRPFLKLYQAMQPVYTSGIYNVGSENPSRIRIAIEPAQLLKGDIMVKCYHKKFRSATRDVIFRLQFHTGAVQGYGLLFGKEELDSACKDDRFPDYGKIELVFSATPEKIQGSEHLYSDQGVTVDYNTADPLIRWDSYENMSADGEVLHTQGPVDGSLYAKVRKKSASDTGIPSSPQGMPATSSPDHGDHTLSVSSDSGHSTASARTDKTEERLTPGARRGLSPQEKAELDQLLSGFGLEDSASSHKDMTDMRSKYSGTRHVVPAQVHVNGDAALKDRETDILDDEMPHHDLHSVDSLGTLSSSEGPQSTHLGPFTCLKSSQNSLLSDGFGNGVAEDHNGVLSPDLGLGVDTLYDRERMCGGREQKPLQPLLRKPSAPTPVQAYGQSNYSTQTWVRQQQMVAAHQYSFASDGEARLGSRSTVDNTGLAQPPPHIPVTPNRGASSRVAVQRGISNGPNPPDTQQLCPGKALQPRFQDDRVTNGVHQEPNTGSSPGSPTLDIDQSIEQLNRLILELDPTFEPIPTHLNALGISAVCPDGVGSGLRCSGRLDSVDGPGRSPGRQGDDPIGGRLRKLSIGQYDNDAASQVTFSKCGWGKAGVDPAPSLGSFSSPEDIKETVITAYPSDLNMIDGRIPNSKESSMCLTPSFPVSPETPYVKTSPRYPPFSPPEPQLSSPASLHKGREPRGCPEIISHTVGMSESPVGPKPTMLRADMPATPNFQQVFASSCTVSSNGPGQRRESPPSAERQWVESSPKSTLTLLGNSHPSESPLGTHEFCSSGKDSPGLPCFQSSELQASFHSHELSMSEPQGALPPAGSQTFLGFNTVTTATSVLPPGEDAGTLLVNSHGTSPAPGTPLLTTGAADNGFLPHNFLTVSPGASSHHSPGLQNQNVSLPGQPPLPEKKRASEGDRSLGSVSPSSSGFSSPHSGSTMSIPFPNVLPDFCKPSEVASPLPDSPNDKLVIVKFVQDTSKFWYKADISREQAIAMLKDKAPGSFIVRDSHSFRGAYGLAMKVATPPPSVLHLNKKAGDLSNELVRHFLIECTPKGVRLKGCSNEPYFGSLTALVCQHSITPLALPCKLLIPERDPLEEIAENSPQTAANSAAELLKQGAACNVWYLNSVEMESLTGHQAVQKALSMTLVQEPPPVSTVVHFKVSAQGITLTDNQRKLFFRRHYPVSSVIFCALDPQDRKWIKDGPSSKVFGFVARKQGSATDNVCHLFAEHDPEQPASAIVNFVSKVMIGSPKKI</sequence>
<feature type="chain" id="PRO_0000295916" description="Tensin-3">
    <location>
        <begin position="1"/>
        <end position="1440"/>
    </location>
</feature>
<feature type="domain" description="Phosphatase tensin-type" evidence="5">
    <location>
        <begin position="1"/>
        <end position="170"/>
    </location>
</feature>
<feature type="domain" description="C2 tensin-type" evidence="4">
    <location>
        <begin position="175"/>
        <end position="301"/>
    </location>
</feature>
<feature type="domain" description="SH2" evidence="3">
    <location>
        <begin position="1167"/>
        <end position="1277"/>
    </location>
</feature>
<feature type="domain" description="PTB" evidence="2">
    <location>
        <begin position="1305"/>
        <end position="1439"/>
    </location>
</feature>
<feature type="region of interest" description="Disordered" evidence="6">
    <location>
        <begin position="358"/>
        <end position="421"/>
    </location>
</feature>
<feature type="region of interest" description="Disordered" evidence="6">
    <location>
        <begin position="607"/>
        <end position="662"/>
    </location>
</feature>
<feature type="region of interest" description="Disordered" evidence="6">
    <location>
        <begin position="675"/>
        <end position="694"/>
    </location>
</feature>
<feature type="region of interest" description="Disordered" evidence="6">
    <location>
        <begin position="740"/>
        <end position="762"/>
    </location>
</feature>
<feature type="region of interest" description="Disordered" evidence="6">
    <location>
        <begin position="846"/>
        <end position="881"/>
    </location>
</feature>
<feature type="region of interest" description="Disordered" evidence="6">
    <location>
        <begin position="887"/>
        <end position="906"/>
    </location>
</feature>
<feature type="region of interest" description="Disordered" evidence="6">
    <location>
        <begin position="920"/>
        <end position="975"/>
    </location>
</feature>
<feature type="region of interest" description="Disordered" evidence="6">
    <location>
        <begin position="1067"/>
        <end position="1123"/>
    </location>
</feature>
<feature type="compositionally biased region" description="Polar residues" evidence="6">
    <location>
        <begin position="363"/>
        <end position="380"/>
    </location>
</feature>
<feature type="compositionally biased region" description="Polar residues" evidence="6">
    <location>
        <begin position="387"/>
        <end position="400"/>
    </location>
</feature>
<feature type="compositionally biased region" description="Polar residues" evidence="6">
    <location>
        <begin position="613"/>
        <end position="622"/>
    </location>
</feature>
<feature type="compositionally biased region" description="Polar residues" evidence="6">
    <location>
        <begin position="646"/>
        <end position="659"/>
    </location>
</feature>
<feature type="compositionally biased region" description="Polar residues" evidence="6">
    <location>
        <begin position="677"/>
        <end position="690"/>
    </location>
</feature>
<feature type="compositionally biased region" description="Pro residues" evidence="6">
    <location>
        <begin position="855"/>
        <end position="864"/>
    </location>
</feature>
<feature type="compositionally biased region" description="Polar residues" evidence="6">
    <location>
        <begin position="943"/>
        <end position="960"/>
    </location>
</feature>
<feature type="compositionally biased region" description="Polar residues" evidence="6">
    <location>
        <begin position="1067"/>
        <end position="1087"/>
    </location>
</feature>
<feature type="compositionally biased region" description="Basic and acidic residues" evidence="6">
    <location>
        <begin position="1094"/>
        <end position="1104"/>
    </location>
</feature>
<feature type="compositionally biased region" description="Low complexity" evidence="6">
    <location>
        <begin position="1105"/>
        <end position="1123"/>
    </location>
</feature>
<feature type="modified residue" description="Phosphothreonine" evidence="1">
    <location>
        <position position="323"/>
    </location>
</feature>
<feature type="modified residue" description="Phosphoserine" evidence="14">
    <location>
        <position position="332"/>
    </location>
</feature>
<feature type="modified residue" description="Phosphoserine" evidence="14">
    <location>
        <position position="361"/>
    </location>
</feature>
<feature type="modified residue" description="Phosphoserine" evidence="14">
    <location>
        <position position="370"/>
    </location>
</feature>
<feature type="modified residue" description="Phosphoserine" evidence="1">
    <location>
        <position position="440"/>
    </location>
</feature>
<feature type="modified residue" description="Phosphoserine" evidence="1">
    <location>
        <position position="516"/>
    </location>
</feature>
<feature type="modified residue" description="Phosphoserine" evidence="14">
    <location>
        <position position="571"/>
    </location>
</feature>
<feature type="modified residue" description="Phosphothreonine" evidence="1">
    <location>
        <position position="632"/>
    </location>
</feature>
<feature type="modified residue" description="Phosphoserine" evidence="14">
    <location>
        <position position="648"/>
    </location>
</feature>
<feature type="modified residue" description="Phosphoserine" evidence="13">
    <location>
        <position position="687"/>
    </location>
</feature>
<feature type="modified residue" description="Phosphoserine" evidence="13 14">
    <location>
        <position position="690"/>
    </location>
</feature>
<feature type="modified residue" description="Phosphoserine" evidence="12 13 14">
    <location>
        <position position="769"/>
    </location>
</feature>
<feature type="modified residue" description="Phosphotyrosine" evidence="1">
    <location>
        <position position="773"/>
    </location>
</feature>
<feature type="modified residue" description="Phosphoserine" evidence="1">
    <location>
        <position position="804"/>
    </location>
</feature>
<feature type="modified residue" description="Phosphoserine" evidence="1">
    <location>
        <position position="860"/>
    </location>
</feature>
<feature type="modified residue" description="Phosphoserine" evidence="14">
    <location>
        <position position="894"/>
    </location>
</feature>
<feature type="modified residue" description="Phosphoserine" evidence="14">
    <location>
        <position position="960"/>
    </location>
</feature>
<feature type="modified residue" description="Phosphoserine" evidence="1">
    <location>
        <position position="1144"/>
    </location>
</feature>
<feature type="modified residue" description="Phosphoserine" evidence="1">
    <location>
        <position position="1149"/>
    </location>
</feature>
<feature type="modified residue" description="Phosphoserine" evidence="1">
    <location>
        <position position="1288"/>
    </location>
</feature>
<feature type="modified residue" description="Phosphoserine" evidence="1">
    <location>
        <position position="1436"/>
    </location>
</feature>
<feature type="splice variant" id="VSP_027128" description="In isoform 2." evidence="10">
    <location>
        <begin position="1"/>
        <end position="890"/>
    </location>
</feature>
<feature type="sequence conflict" description="In Ref. 1; BAE34356." evidence="11" ref="1">
    <original>T</original>
    <variation>A</variation>
    <location>
        <position position="910"/>
    </location>
</feature>
<feature type="sequence conflict" description="In Ref. 1; BAE34356." evidence="11" ref="1">
    <original>V</original>
    <variation>I</variation>
    <location>
        <position position="1025"/>
    </location>
</feature>
<feature type="sequence conflict" description="In Ref. 1; BAE34356." evidence="11" ref="1">
    <original>L</original>
    <variation>M</variation>
    <location>
        <position position="1051"/>
    </location>
</feature>
<feature type="sequence conflict" description="In Ref. 1; BAE34356." evidence="11" ref="1">
    <original>T</original>
    <variation>M</variation>
    <location>
        <position position="1067"/>
    </location>
</feature>
<accession>Q5SSZ5</accession>
<accession>Q3TZ54</accession>
<accession>Q8BJA7</accession>
<dbReference type="EC" id="3.1.3.-" evidence="11"/>
<dbReference type="EMBL" id="AK089717">
    <property type="protein sequence ID" value="BAC40948.1"/>
    <property type="molecule type" value="mRNA"/>
</dbReference>
<dbReference type="EMBL" id="AK158101">
    <property type="protein sequence ID" value="BAE34356.1"/>
    <property type="molecule type" value="mRNA"/>
</dbReference>
<dbReference type="EMBL" id="AL603845">
    <property type="status" value="NOT_ANNOTATED_CDS"/>
    <property type="molecule type" value="Genomic_DNA"/>
</dbReference>
<dbReference type="EMBL" id="AL662881">
    <property type="status" value="NOT_ANNOTATED_CDS"/>
    <property type="molecule type" value="Genomic_DNA"/>
</dbReference>
<dbReference type="CCDS" id="CCDS36109.1">
    <molecule id="Q5SSZ5-1"/>
</dbReference>
<dbReference type="RefSeq" id="NP_001077056.1">
    <molecule id="Q5SSZ5-1"/>
    <property type="nucleotide sequence ID" value="NM_001083587.1"/>
</dbReference>
<dbReference type="RefSeq" id="XP_006514803.2">
    <molecule id="Q5SSZ5-1"/>
    <property type="nucleotide sequence ID" value="XM_006514740.4"/>
</dbReference>
<dbReference type="RefSeq" id="XP_006514804.1">
    <molecule id="Q5SSZ5-1"/>
    <property type="nucleotide sequence ID" value="XM_006514741.3"/>
</dbReference>
<dbReference type="RefSeq" id="XP_011242030.1">
    <molecule id="Q5SSZ5-1"/>
    <property type="nucleotide sequence ID" value="XM_011243728.4"/>
</dbReference>
<dbReference type="RefSeq" id="XP_017170096.1">
    <property type="nucleotide sequence ID" value="XM_017314607.1"/>
</dbReference>
<dbReference type="RefSeq" id="XP_030101947.1">
    <molecule id="Q5SSZ5-1"/>
    <property type="nucleotide sequence ID" value="XM_030246087.1"/>
</dbReference>
<dbReference type="RefSeq" id="XP_036012655.1">
    <molecule id="Q5SSZ5-1"/>
    <property type="nucleotide sequence ID" value="XM_036156762.1"/>
</dbReference>
<dbReference type="RefSeq" id="XP_036012656.1">
    <molecule id="Q5SSZ5-1"/>
    <property type="nucleotide sequence ID" value="XM_036156763.1"/>
</dbReference>
<dbReference type="RefSeq" id="XP_036012657.1">
    <molecule id="Q5SSZ5-1"/>
    <property type="nucleotide sequence ID" value="XM_036156764.1"/>
</dbReference>
<dbReference type="SMR" id="Q5SSZ5"/>
<dbReference type="BioGRID" id="235637">
    <property type="interactions" value="8"/>
</dbReference>
<dbReference type="FunCoup" id="Q5SSZ5">
    <property type="interactions" value="575"/>
</dbReference>
<dbReference type="IntAct" id="Q5SSZ5">
    <property type="interactions" value="1"/>
</dbReference>
<dbReference type="STRING" id="10090.ENSMUSP00000020695"/>
<dbReference type="GlyGen" id="Q5SSZ5">
    <property type="glycosylation" value="3 sites, 1 N-linked glycan (1 site), 1 O-linked glycan (1 site)"/>
</dbReference>
<dbReference type="iPTMnet" id="Q5SSZ5"/>
<dbReference type="PhosphoSitePlus" id="Q5SSZ5"/>
<dbReference type="SwissPalm" id="Q5SSZ5"/>
<dbReference type="jPOST" id="Q5SSZ5"/>
<dbReference type="PaxDb" id="10090-ENSMUSP00000020695"/>
<dbReference type="PeptideAtlas" id="Q5SSZ5"/>
<dbReference type="ProteomicsDB" id="262869">
    <molecule id="Q5SSZ5-1"/>
</dbReference>
<dbReference type="ProteomicsDB" id="262870">
    <molecule id="Q5SSZ5-2"/>
</dbReference>
<dbReference type="Pumba" id="Q5SSZ5"/>
<dbReference type="Antibodypedia" id="1019">
    <property type="antibodies" value="142 antibodies from 26 providers"/>
</dbReference>
<dbReference type="DNASU" id="319939"/>
<dbReference type="Ensembl" id="ENSMUST00000020695.13">
    <molecule id="Q5SSZ5-1"/>
    <property type="protein sequence ID" value="ENSMUSP00000020695.7"/>
    <property type="gene ID" value="ENSMUSG00000020422.15"/>
</dbReference>
<dbReference type="GeneID" id="319939"/>
<dbReference type="KEGG" id="mmu:319939"/>
<dbReference type="UCSC" id="uc007hzj.1">
    <molecule id="Q5SSZ5-2"/>
    <property type="organism name" value="mouse"/>
</dbReference>
<dbReference type="UCSC" id="uc007hzk.1">
    <molecule id="Q5SSZ5-1"/>
    <property type="organism name" value="mouse"/>
</dbReference>
<dbReference type="AGR" id="MGI:2443012"/>
<dbReference type="CTD" id="64759"/>
<dbReference type="MGI" id="MGI:2443012">
    <property type="gene designation" value="Tns3"/>
</dbReference>
<dbReference type="VEuPathDB" id="HostDB:ENSMUSG00000020422"/>
<dbReference type="eggNOG" id="KOG1930">
    <property type="taxonomic scope" value="Eukaryota"/>
</dbReference>
<dbReference type="eggNOG" id="KOG2283">
    <property type="taxonomic scope" value="Eukaryota"/>
</dbReference>
<dbReference type="GeneTree" id="ENSGT00940000156328"/>
<dbReference type="HOGENOM" id="CLU_002189_1_0_1"/>
<dbReference type="InParanoid" id="Q5SSZ5"/>
<dbReference type="OMA" id="QGSEHLH"/>
<dbReference type="PhylomeDB" id="Q5SSZ5"/>
<dbReference type="TreeFam" id="TF315996"/>
<dbReference type="Reactome" id="R-MMU-8875513">
    <property type="pathway name" value="MET interacts with TNS proteins"/>
</dbReference>
<dbReference type="BioGRID-ORCS" id="319939">
    <property type="hits" value="4 hits in 77 CRISPR screens"/>
</dbReference>
<dbReference type="ChiTaRS" id="Tns3">
    <property type="organism name" value="mouse"/>
</dbReference>
<dbReference type="PRO" id="PR:Q5SSZ5"/>
<dbReference type="Proteomes" id="UP000000589">
    <property type="component" value="Chromosome 11"/>
</dbReference>
<dbReference type="RNAct" id="Q5SSZ5">
    <property type="molecule type" value="protein"/>
</dbReference>
<dbReference type="Bgee" id="ENSMUSG00000020422">
    <property type="expression patterns" value="Expressed in humerus cartilage element and 246 other cell types or tissues"/>
</dbReference>
<dbReference type="ExpressionAtlas" id="Q5SSZ5">
    <property type="expression patterns" value="baseline and differential"/>
</dbReference>
<dbReference type="GO" id="GO:0042995">
    <property type="term" value="C:cell projection"/>
    <property type="evidence" value="ECO:0007669"/>
    <property type="project" value="UniProtKB-KW"/>
</dbReference>
<dbReference type="GO" id="GO:0005925">
    <property type="term" value="C:focal adhesion"/>
    <property type="evidence" value="ECO:0007669"/>
    <property type="project" value="UniProtKB-SubCell"/>
</dbReference>
<dbReference type="GO" id="GO:0002102">
    <property type="term" value="C:podosome"/>
    <property type="evidence" value="ECO:0000314"/>
    <property type="project" value="MGI"/>
</dbReference>
<dbReference type="GO" id="GO:0005091">
    <property type="term" value="F:guanyl-nucleotide exchange factor adaptor activity"/>
    <property type="evidence" value="ECO:0000314"/>
    <property type="project" value="MGI"/>
</dbReference>
<dbReference type="GO" id="GO:0004721">
    <property type="term" value="F:phosphoprotein phosphatase activity"/>
    <property type="evidence" value="ECO:0007669"/>
    <property type="project" value="UniProtKB-KW"/>
</dbReference>
<dbReference type="GO" id="GO:0045453">
    <property type="term" value="P:bone resorption"/>
    <property type="evidence" value="ECO:0000315"/>
    <property type="project" value="MGI"/>
</dbReference>
<dbReference type="GO" id="GO:0008283">
    <property type="term" value="P:cell population proliferation"/>
    <property type="evidence" value="ECO:0000315"/>
    <property type="project" value="MGI"/>
</dbReference>
<dbReference type="GO" id="GO:0043542">
    <property type="term" value="P:endothelial cell migration"/>
    <property type="evidence" value="ECO:0000315"/>
    <property type="project" value="MGI"/>
</dbReference>
<dbReference type="GO" id="GO:0048286">
    <property type="term" value="P:lung alveolus development"/>
    <property type="evidence" value="ECO:0000315"/>
    <property type="project" value="MGI"/>
</dbReference>
<dbReference type="GO" id="GO:0035024">
    <property type="term" value="P:negative regulation of Rho protein signal transduction"/>
    <property type="evidence" value="ECO:0000315"/>
    <property type="project" value="MGI"/>
</dbReference>
<dbReference type="GO" id="GO:0071800">
    <property type="term" value="P:podosome assembly"/>
    <property type="evidence" value="ECO:0000315"/>
    <property type="project" value="MGI"/>
</dbReference>
<dbReference type="GO" id="GO:0008284">
    <property type="term" value="P:positive regulation of cell population proliferation"/>
    <property type="evidence" value="ECO:0000315"/>
    <property type="project" value="MGI"/>
</dbReference>
<dbReference type="GO" id="GO:0035022">
    <property type="term" value="P:positive regulation of Rac protein signal transduction"/>
    <property type="evidence" value="ECO:0000353"/>
    <property type="project" value="MGI"/>
</dbReference>
<dbReference type="CDD" id="cd01213">
    <property type="entry name" value="PTB_tensin"/>
    <property type="match status" value="1"/>
</dbReference>
<dbReference type="CDD" id="cd14561">
    <property type="entry name" value="PTP_tensin-3"/>
    <property type="match status" value="1"/>
</dbReference>
<dbReference type="CDD" id="cd09927">
    <property type="entry name" value="SH2_Tensin_like"/>
    <property type="match status" value="1"/>
</dbReference>
<dbReference type="FunFam" id="2.30.29.30:FF:000039">
    <property type="entry name" value="Tensin 1"/>
    <property type="match status" value="1"/>
</dbReference>
<dbReference type="FunFam" id="3.30.505.10:FF:000002">
    <property type="entry name" value="Tensin 1"/>
    <property type="match status" value="1"/>
</dbReference>
<dbReference type="FunFam" id="2.60.40.1110:FF:000002">
    <property type="entry name" value="tensin-1 isoform X2"/>
    <property type="match status" value="1"/>
</dbReference>
<dbReference type="FunFam" id="3.90.190.10:FF:000010">
    <property type="entry name" value="tensin-1 isoform X2"/>
    <property type="match status" value="1"/>
</dbReference>
<dbReference type="Gene3D" id="2.60.40.1110">
    <property type="match status" value="1"/>
</dbReference>
<dbReference type="Gene3D" id="2.30.29.30">
    <property type="entry name" value="Pleckstrin-homology domain (PH domain)/Phosphotyrosine-binding domain (PTB)"/>
    <property type="match status" value="1"/>
</dbReference>
<dbReference type="Gene3D" id="3.90.190.10">
    <property type="entry name" value="Protein tyrosine phosphatase superfamily"/>
    <property type="match status" value="1"/>
</dbReference>
<dbReference type="Gene3D" id="3.30.505.10">
    <property type="entry name" value="SH2 domain"/>
    <property type="match status" value="1"/>
</dbReference>
<dbReference type="InterPro" id="IPR035892">
    <property type="entry name" value="C2_domain_sf"/>
</dbReference>
<dbReference type="InterPro" id="IPR011993">
    <property type="entry name" value="PH-like_dom_sf"/>
</dbReference>
<dbReference type="InterPro" id="IPR029021">
    <property type="entry name" value="Prot-tyrosine_phosphatase-like"/>
</dbReference>
<dbReference type="InterPro" id="IPR013625">
    <property type="entry name" value="PTB"/>
</dbReference>
<dbReference type="InterPro" id="IPR006020">
    <property type="entry name" value="PTB/PI_dom"/>
</dbReference>
<dbReference type="InterPro" id="IPR000980">
    <property type="entry name" value="SH2"/>
</dbReference>
<dbReference type="InterPro" id="IPR036860">
    <property type="entry name" value="SH2_dom_sf"/>
</dbReference>
<dbReference type="InterPro" id="IPR035012">
    <property type="entry name" value="Tensin-like_SH2"/>
</dbReference>
<dbReference type="InterPro" id="IPR014020">
    <property type="entry name" value="Tensin_C2-dom"/>
</dbReference>
<dbReference type="InterPro" id="IPR029023">
    <property type="entry name" value="Tensin_phosphatase"/>
</dbReference>
<dbReference type="InterPro" id="IPR033929">
    <property type="entry name" value="Tensin_PTB"/>
</dbReference>
<dbReference type="InterPro" id="IPR051484">
    <property type="entry name" value="Tensin_PTEN_phosphatase"/>
</dbReference>
<dbReference type="InterPro" id="IPR003595">
    <property type="entry name" value="Tyr_Pase_cat"/>
</dbReference>
<dbReference type="InterPro" id="IPR000387">
    <property type="entry name" value="Tyr_Pase_dom"/>
</dbReference>
<dbReference type="PANTHER" id="PTHR45734">
    <property type="entry name" value="TENSIN"/>
    <property type="match status" value="1"/>
</dbReference>
<dbReference type="PANTHER" id="PTHR45734:SF5">
    <property type="entry name" value="TENSIN-3"/>
    <property type="match status" value="1"/>
</dbReference>
<dbReference type="Pfam" id="PF08416">
    <property type="entry name" value="PTB"/>
    <property type="match status" value="1"/>
</dbReference>
<dbReference type="Pfam" id="PF10409">
    <property type="entry name" value="PTEN_C2"/>
    <property type="match status" value="1"/>
</dbReference>
<dbReference type="Pfam" id="PF00017">
    <property type="entry name" value="SH2"/>
    <property type="match status" value="1"/>
</dbReference>
<dbReference type="SMART" id="SM00462">
    <property type="entry name" value="PTB"/>
    <property type="match status" value="1"/>
</dbReference>
<dbReference type="SMART" id="SM01326">
    <property type="entry name" value="PTEN_C2"/>
    <property type="match status" value="1"/>
</dbReference>
<dbReference type="SMART" id="SM00404">
    <property type="entry name" value="PTPc_motif"/>
    <property type="match status" value="1"/>
</dbReference>
<dbReference type="SMART" id="SM00252">
    <property type="entry name" value="SH2"/>
    <property type="match status" value="1"/>
</dbReference>
<dbReference type="SUPFAM" id="SSF52799">
    <property type="entry name" value="(Phosphotyrosine protein) phosphatases II"/>
    <property type="match status" value="1"/>
</dbReference>
<dbReference type="SUPFAM" id="SSF49562">
    <property type="entry name" value="C2 domain (Calcium/lipid-binding domain, CaLB)"/>
    <property type="match status" value="1"/>
</dbReference>
<dbReference type="SUPFAM" id="SSF50729">
    <property type="entry name" value="PH domain-like"/>
    <property type="match status" value="1"/>
</dbReference>
<dbReference type="SUPFAM" id="SSF55550">
    <property type="entry name" value="SH2 domain"/>
    <property type="match status" value="1"/>
</dbReference>
<dbReference type="PROSITE" id="PS51182">
    <property type="entry name" value="C2_TENSIN"/>
    <property type="match status" value="1"/>
</dbReference>
<dbReference type="PROSITE" id="PS51181">
    <property type="entry name" value="PPASE_TENSIN"/>
    <property type="match status" value="1"/>
</dbReference>
<dbReference type="PROSITE" id="PS50001">
    <property type="entry name" value="SH2"/>
    <property type="match status" value="1"/>
</dbReference>
<comment type="function">
    <text evidence="1 8 9 11">May act as a protein phosphatase and/or a lipid phosphatase (Probable). Involved in the dissociation of the integrin-tensin-actin complex (By similarity). EGF activates TNS4 and down-regulates TNS3 which results in capping the tail of ITGB1 (By similarity). Increases DOCK5 guanine nucleotide exchange activity towards Rac and plays a role in osteoclast podosome organization (PubMed:27505886). Enhances RHOA activation in the presence of DLC1 (By similarity). Required for growth factor-induced epithelial cell migration; growth factor stimulation induces TNS3 phosphorylation which changes its binding preference from DLC1 to the p85 regulatory subunit of the PI3K kinase complex, displacing PI3K inhibitor PTEN and resulting in translocation of the TNS3-p85 complex to the leading edge of migrating cells to promote RAC1 activation (By similarity). Meanwhile, PTEN switches binding preference from p85 to DLC1 and the PTEN-DLC1 complex translocates to the posterior of migrating cells to activate RHOA (By similarity). Acts as an adapter protein by bridging the association of scaffolding protein PEAK1 with integrins ITGB1, ITGB3 and ITGB5 which contributes to the promotion of cell migration (PubMed:35687021). Controls tonsil-derived mesenchymal stem cell proliferation and differentiation by regulating the activity of integrin ITGB1 (By similarity).</text>
</comment>
<comment type="subunit">
    <text evidence="1 8 9">Interacts with EGFR; EGF promotes the interaction with EGFR (By similarity). Interacts with PTK2/FAK1 and BCAR1 (By similarity). Tyrosine phosphorylation is critical for these interactions (By similarity). Interacts with Rho GTPase-activating protein DLC1 and with the regulatory p85 subunit of the PI3K kinase complex; in resting cells, interacts (via C2 tensin-type domain) with DLC1 but, following growth factor stimulation, TNS3 is phosphorylated which leads to weakened interaction with DLC1 and enhanced interaction (via C2 tensin-type domain) with p85 while DLC1 interaction with PTEN increases (By similarity). Interacts (when phosphorylated on the SH2 domain) with integrins ITGB1, ITGB3 and ITGB5 and with scaffolding protein PEAK1 (phosphorylated on 'Tyr-632'); these interactions mediate the association of PEAK1 with ITGB1, ITGB3 and ITGB5 (PubMed:35687021). Interacts (via N-terminus) with DOCK5 (via N-terminus); the interaction increases DOCK5 guanine nucleotide exchange activity towards Rac (PubMed:27505886). Interacts with receptor tyrosine kinase MET (By similarity).</text>
</comment>
<comment type="subcellular location">
    <subcellularLocation>
        <location evidence="1">Cell junction</location>
        <location evidence="1">Focal adhesion</location>
    </subcellularLocation>
    <subcellularLocation>
        <location evidence="8">Cell projection</location>
        <location evidence="8">Podosome</location>
    </subcellularLocation>
    <text evidence="1">Localizes to both focal and fibrillar adhesions but is mostly found in fibrillar adhesions.</text>
</comment>
<comment type="alternative products">
    <event type="alternative splicing"/>
    <isoform>
        <id>Q5SSZ5-1</id>
        <name>1</name>
        <sequence type="displayed"/>
    </isoform>
    <isoform>
        <id>Q5SSZ5-2</id>
        <name>2</name>
        <sequence type="described" ref="VSP_027128"/>
    </isoform>
</comment>
<comment type="tissue specificity">
    <text evidence="7">Expressed in brain, heart, lung, liver, spleen, kidney, stomach, small intestine, skeletal muscle, skin, thymus, testis, uterus, placenta, aorta and trachea.</text>
</comment>
<comment type="developmental stage">
    <text evidence="7 8">Expressed at 13.5 dpc in lung, liver, spleen, stomach, aorta, trachea, and perichondrium (PubMed:15733665). Expression increases during osteoclast differentiation (PubMed:27505886).</text>
</comment>
<comment type="PTM">
    <text evidence="1">Phosphorylated on Ser/Thr and Tyr residues. Phosphorylated on Thr-323 in the C2-type tensin domain following EGF stimulation which changes its binding preference from DLC1 to the p85 regulatory subunit of the PI3K kinase complex. EGF induces tyrosine phosphorylation in a time- and dose-dependent manner. Phosphorylation of the SH2 domain enhances interaction with PEAK1.</text>
</comment>
<comment type="disruption phenotype">
    <text evidence="7">Mice display growth retardation and incomplete development of small intestine, lung, and bone. Postnatal lethality is detected in one third of the homozygous mutants.</text>
</comment>
<comment type="similarity">
    <text evidence="11">Belongs to the PTEN phosphatase protein family.</text>
</comment>
<name>TENS3_MOUSE</name>
<organism>
    <name type="scientific">Mus musculus</name>
    <name type="common">Mouse</name>
    <dbReference type="NCBI Taxonomy" id="10090"/>
    <lineage>
        <taxon>Eukaryota</taxon>
        <taxon>Metazoa</taxon>
        <taxon>Chordata</taxon>
        <taxon>Craniata</taxon>
        <taxon>Vertebrata</taxon>
        <taxon>Euteleostomi</taxon>
        <taxon>Mammalia</taxon>
        <taxon>Eutheria</taxon>
        <taxon>Euarchontoglires</taxon>
        <taxon>Glires</taxon>
        <taxon>Rodentia</taxon>
        <taxon>Myomorpha</taxon>
        <taxon>Muroidea</taxon>
        <taxon>Muridae</taxon>
        <taxon>Murinae</taxon>
        <taxon>Mus</taxon>
        <taxon>Mus</taxon>
    </lineage>
</organism>
<evidence type="ECO:0000250" key="1">
    <source>
        <dbReference type="UniProtKB" id="Q68CZ2"/>
    </source>
</evidence>
<evidence type="ECO:0000255" key="2"/>
<evidence type="ECO:0000255" key="3">
    <source>
        <dbReference type="PROSITE-ProRule" id="PRU00191"/>
    </source>
</evidence>
<evidence type="ECO:0000255" key="4">
    <source>
        <dbReference type="PROSITE-ProRule" id="PRU00589"/>
    </source>
</evidence>
<evidence type="ECO:0000255" key="5">
    <source>
        <dbReference type="PROSITE-ProRule" id="PRU00590"/>
    </source>
</evidence>
<evidence type="ECO:0000256" key="6">
    <source>
        <dbReference type="SAM" id="MobiDB-lite"/>
    </source>
</evidence>
<evidence type="ECO:0000269" key="7">
    <source>
    </source>
</evidence>
<evidence type="ECO:0000269" key="8">
    <source>
    </source>
</evidence>
<evidence type="ECO:0000269" key="9">
    <source>
    </source>
</evidence>
<evidence type="ECO:0000303" key="10">
    <source>
    </source>
</evidence>
<evidence type="ECO:0000305" key="11"/>
<evidence type="ECO:0007744" key="12">
    <source>
    </source>
</evidence>
<evidence type="ECO:0007744" key="13">
    <source>
    </source>
</evidence>
<evidence type="ECO:0007744" key="14">
    <source>
    </source>
</evidence>
<protein>
    <recommendedName>
        <fullName>Tensin-3</fullName>
        <ecNumber evidence="11">3.1.3.-</ecNumber>
    </recommendedName>
    <alternativeName>
        <fullName>Tensin-like SH2 domain-containing protein 1</fullName>
    </alternativeName>
</protein>
<keyword id="KW-0025">Alternative splicing</keyword>
<keyword id="KW-0965">Cell junction</keyword>
<keyword id="KW-0966">Cell projection</keyword>
<keyword id="KW-0378">Hydrolase</keyword>
<keyword id="KW-0597">Phosphoprotein</keyword>
<keyword id="KW-0904">Protein phosphatase</keyword>
<keyword id="KW-1185">Reference proteome</keyword>
<keyword id="KW-0727">SH2 domain</keyword>
<gene>
    <name type="primary">Tns3</name>
    <name type="synonym">Tens1</name>
</gene>